<evidence type="ECO:0000255" key="1">
    <source>
        <dbReference type="HAMAP-Rule" id="MF_01215"/>
    </source>
</evidence>
<protein>
    <recommendedName>
        <fullName evidence="1">Orotidine 5'-phosphate decarboxylase</fullName>
        <ecNumber evidence="1">4.1.1.23</ecNumber>
    </recommendedName>
    <alternativeName>
        <fullName evidence="1">OMP decarboxylase</fullName>
        <shortName evidence="1">OMPDCase</shortName>
        <shortName evidence="1">OMPdecase</shortName>
    </alternativeName>
</protein>
<gene>
    <name evidence="1" type="primary">pyrF</name>
    <name type="ordered locus">trd_0010</name>
</gene>
<organism>
    <name type="scientific">Thermomicrobium roseum (strain ATCC 27502 / DSM 5159 / P-2)</name>
    <dbReference type="NCBI Taxonomy" id="309801"/>
    <lineage>
        <taxon>Bacteria</taxon>
        <taxon>Pseudomonadati</taxon>
        <taxon>Thermomicrobiota</taxon>
        <taxon>Thermomicrobia</taxon>
        <taxon>Thermomicrobiales</taxon>
        <taxon>Thermomicrobiaceae</taxon>
        <taxon>Thermomicrobium</taxon>
    </lineage>
</organism>
<feature type="chain" id="PRO_1000164751" description="Orotidine 5'-phosphate decarboxylase">
    <location>
        <begin position="1"/>
        <end position="281"/>
    </location>
</feature>
<feature type="active site" description="Proton donor" evidence="1">
    <location>
        <position position="94"/>
    </location>
</feature>
<reference key="1">
    <citation type="journal article" date="2009" name="PLoS ONE">
        <title>Complete genome sequence of the aerobic CO-oxidizing thermophile Thermomicrobium roseum.</title>
        <authorList>
            <person name="Wu D."/>
            <person name="Raymond J."/>
            <person name="Wu M."/>
            <person name="Chatterji S."/>
            <person name="Ren Q."/>
            <person name="Graham J.E."/>
            <person name="Bryant D.A."/>
            <person name="Robb F."/>
            <person name="Colman A."/>
            <person name="Tallon L.J."/>
            <person name="Badger J.H."/>
            <person name="Madupu R."/>
            <person name="Ward N.L."/>
            <person name="Eisen J.A."/>
        </authorList>
    </citation>
    <scope>NUCLEOTIDE SEQUENCE [LARGE SCALE GENOMIC DNA]</scope>
    <source>
        <strain>ATCC 27502 / DSM 5159 / P-2</strain>
    </source>
</reference>
<dbReference type="EC" id="4.1.1.23" evidence="1"/>
<dbReference type="EMBL" id="CP001275">
    <property type="protein sequence ID" value="ACM05119.1"/>
    <property type="molecule type" value="Genomic_DNA"/>
</dbReference>
<dbReference type="RefSeq" id="WP_012641425.1">
    <property type="nucleotide sequence ID" value="NC_011959.1"/>
</dbReference>
<dbReference type="SMR" id="B9L1A9"/>
<dbReference type="STRING" id="309801.trd_0010"/>
<dbReference type="KEGG" id="tro:trd_0010"/>
<dbReference type="eggNOG" id="COG0284">
    <property type="taxonomic scope" value="Bacteria"/>
</dbReference>
<dbReference type="HOGENOM" id="CLU_060704_1_0_0"/>
<dbReference type="OrthoDB" id="9808470at2"/>
<dbReference type="UniPathway" id="UPA00070">
    <property type="reaction ID" value="UER00120"/>
</dbReference>
<dbReference type="Proteomes" id="UP000000447">
    <property type="component" value="Chromosome"/>
</dbReference>
<dbReference type="GO" id="GO:0004590">
    <property type="term" value="F:orotidine-5'-phosphate decarboxylase activity"/>
    <property type="evidence" value="ECO:0007669"/>
    <property type="project" value="UniProtKB-UniRule"/>
</dbReference>
<dbReference type="GO" id="GO:0006207">
    <property type="term" value="P:'de novo' pyrimidine nucleobase biosynthetic process"/>
    <property type="evidence" value="ECO:0007669"/>
    <property type="project" value="InterPro"/>
</dbReference>
<dbReference type="GO" id="GO:0044205">
    <property type="term" value="P:'de novo' UMP biosynthetic process"/>
    <property type="evidence" value="ECO:0007669"/>
    <property type="project" value="UniProtKB-UniRule"/>
</dbReference>
<dbReference type="CDD" id="cd04725">
    <property type="entry name" value="OMP_decarboxylase_like"/>
    <property type="match status" value="1"/>
</dbReference>
<dbReference type="Gene3D" id="3.20.20.70">
    <property type="entry name" value="Aldolase class I"/>
    <property type="match status" value="1"/>
</dbReference>
<dbReference type="HAMAP" id="MF_01215">
    <property type="entry name" value="OMPdecase_type2"/>
    <property type="match status" value="1"/>
</dbReference>
<dbReference type="InterPro" id="IPR013785">
    <property type="entry name" value="Aldolase_TIM"/>
</dbReference>
<dbReference type="InterPro" id="IPR011995">
    <property type="entry name" value="OMPdecase_type-2"/>
</dbReference>
<dbReference type="InterPro" id="IPR001754">
    <property type="entry name" value="OMPdeCOase_dom"/>
</dbReference>
<dbReference type="InterPro" id="IPR011060">
    <property type="entry name" value="RibuloseP-bd_barrel"/>
</dbReference>
<dbReference type="NCBIfam" id="TIGR02127">
    <property type="entry name" value="pyrF_sub2"/>
    <property type="match status" value="1"/>
</dbReference>
<dbReference type="PANTHER" id="PTHR43375">
    <property type="entry name" value="OROTIDINE 5'-PHOSPHATE DECARBOXYLASE"/>
    <property type="match status" value="1"/>
</dbReference>
<dbReference type="PANTHER" id="PTHR43375:SF1">
    <property type="entry name" value="OROTIDINE 5'-PHOSPHATE DECARBOXYLASE"/>
    <property type="match status" value="1"/>
</dbReference>
<dbReference type="Pfam" id="PF00215">
    <property type="entry name" value="OMPdecase"/>
    <property type="match status" value="1"/>
</dbReference>
<dbReference type="SMART" id="SM00934">
    <property type="entry name" value="OMPdecase"/>
    <property type="match status" value="1"/>
</dbReference>
<dbReference type="SUPFAM" id="SSF51366">
    <property type="entry name" value="Ribulose-phoshate binding barrel"/>
    <property type="match status" value="1"/>
</dbReference>
<proteinExistence type="inferred from homology"/>
<keyword id="KW-0210">Decarboxylase</keyword>
<keyword id="KW-0456">Lyase</keyword>
<keyword id="KW-0665">Pyrimidine biosynthesis</keyword>
<keyword id="KW-1185">Reference proteome</keyword>
<comment type="catalytic activity">
    <reaction evidence="1">
        <text>orotidine 5'-phosphate + H(+) = UMP + CO2</text>
        <dbReference type="Rhea" id="RHEA:11596"/>
        <dbReference type="ChEBI" id="CHEBI:15378"/>
        <dbReference type="ChEBI" id="CHEBI:16526"/>
        <dbReference type="ChEBI" id="CHEBI:57538"/>
        <dbReference type="ChEBI" id="CHEBI:57865"/>
        <dbReference type="EC" id="4.1.1.23"/>
    </reaction>
</comment>
<comment type="pathway">
    <text evidence="1">Pyrimidine metabolism; UMP biosynthesis via de novo pathway; UMP from orotate: step 2/2.</text>
</comment>
<comment type="similarity">
    <text evidence="1">Belongs to the OMP decarboxylase family. Type 2 subfamily.</text>
</comment>
<name>PYRF_THERP</name>
<accession>B9L1A9</accession>
<sequence length="281" mass="30141">MSFRERLEQTIAQNHSLLCIGLDPDLERFPTGIPRDPEGIVVFNRAIIEATADLVCAYKPNLAFYLQYGAAGIAALATTRQLIPPHIPVILDAKLGDIASTSAAYARAVFETLGFDALTVHPYLGSEALEPFLSTSDRGVFVLVRTSNPGASEIQDLPVGEAGEPLYLWLAERARAWNQRSGNVGLVVGATYPVDLALVRQRCPDLPILAPGIGAQGGDLERAVCAGLTEATAPLLVTVSRSILYADASARFAESARAAARRVRDTIERIRKEVAGQAGHR</sequence>